<organism>
    <name type="scientific">Escherichia coli (strain K12)</name>
    <dbReference type="NCBI Taxonomy" id="83333"/>
    <lineage>
        <taxon>Bacteria</taxon>
        <taxon>Pseudomonadati</taxon>
        <taxon>Pseudomonadota</taxon>
        <taxon>Gammaproteobacteria</taxon>
        <taxon>Enterobacterales</taxon>
        <taxon>Enterobacteriaceae</taxon>
        <taxon>Escherichia</taxon>
    </lineage>
</organism>
<gene>
    <name type="primary">yrhB</name>
    <name type="ordered locus">b3446</name>
    <name type="ordered locus">JW3411</name>
</gene>
<accession>P46857</accession>
<accession>Q2M7A9</accession>
<dbReference type="EMBL" id="U18997">
    <property type="protein sequence ID" value="AAA58244.1"/>
    <property type="molecule type" value="Genomic_DNA"/>
</dbReference>
<dbReference type="EMBL" id="U00096">
    <property type="protein sequence ID" value="AAC76471.1"/>
    <property type="molecule type" value="Genomic_DNA"/>
</dbReference>
<dbReference type="EMBL" id="AP009048">
    <property type="protein sequence ID" value="BAE77847.1"/>
    <property type="molecule type" value="Genomic_DNA"/>
</dbReference>
<dbReference type="PIR" id="A65141">
    <property type="entry name" value="A65141"/>
</dbReference>
<dbReference type="RefSeq" id="NP_417903.1">
    <property type="nucleotide sequence ID" value="NC_000913.3"/>
</dbReference>
<dbReference type="RefSeq" id="WP_000634159.1">
    <property type="nucleotide sequence ID" value="NZ_SSZK01000008.1"/>
</dbReference>
<dbReference type="SMR" id="P46857"/>
<dbReference type="BioGRID" id="4261662">
    <property type="interactions" value="22"/>
</dbReference>
<dbReference type="FunCoup" id="P46857">
    <property type="interactions" value="414"/>
</dbReference>
<dbReference type="IntAct" id="P46857">
    <property type="interactions" value="5"/>
</dbReference>
<dbReference type="STRING" id="511145.b3446"/>
<dbReference type="PaxDb" id="511145-b3446"/>
<dbReference type="EnsemblBacteria" id="AAC76471">
    <property type="protein sequence ID" value="AAC76471"/>
    <property type="gene ID" value="b3446"/>
</dbReference>
<dbReference type="GeneID" id="947948"/>
<dbReference type="KEGG" id="ecj:JW3411"/>
<dbReference type="KEGG" id="eco:b3446"/>
<dbReference type="KEGG" id="ecoc:C3026_18665"/>
<dbReference type="PATRIC" id="fig|1411691.4.peg.3281"/>
<dbReference type="EchoBASE" id="EB2782"/>
<dbReference type="eggNOG" id="ENOG5032TBX">
    <property type="taxonomic scope" value="Bacteria"/>
</dbReference>
<dbReference type="HOGENOM" id="CLU_173109_0_0_6"/>
<dbReference type="InParanoid" id="P46857"/>
<dbReference type="OrthoDB" id="3542635at2"/>
<dbReference type="BioCyc" id="EcoCyc:G7763-MONOMER"/>
<dbReference type="PRO" id="PR:P46857"/>
<dbReference type="Proteomes" id="UP000000625">
    <property type="component" value="Chromosome"/>
</dbReference>
<dbReference type="InterPro" id="IPR029082">
    <property type="entry name" value="Imm35"/>
</dbReference>
<dbReference type="Pfam" id="PF15567">
    <property type="entry name" value="Imm35"/>
    <property type="match status" value="1"/>
</dbReference>
<proteinExistence type="predicted"/>
<name>YRHB_ECOLI</name>
<feature type="chain" id="PRO_0000169560" description="Uncharacterized protein YrhB">
    <location>
        <begin position="1"/>
        <end position="94"/>
    </location>
</feature>
<reference key="1">
    <citation type="journal article" date="1997" name="Science">
        <title>The complete genome sequence of Escherichia coli K-12.</title>
        <authorList>
            <person name="Blattner F.R."/>
            <person name="Plunkett G. III"/>
            <person name="Bloch C.A."/>
            <person name="Perna N.T."/>
            <person name="Burland V."/>
            <person name="Riley M."/>
            <person name="Collado-Vides J."/>
            <person name="Glasner J.D."/>
            <person name="Rode C.K."/>
            <person name="Mayhew G.F."/>
            <person name="Gregor J."/>
            <person name="Davis N.W."/>
            <person name="Kirkpatrick H.A."/>
            <person name="Goeden M.A."/>
            <person name="Rose D.J."/>
            <person name="Mau B."/>
            <person name="Shao Y."/>
        </authorList>
    </citation>
    <scope>NUCLEOTIDE SEQUENCE [LARGE SCALE GENOMIC DNA]</scope>
    <source>
        <strain>K12 / MG1655 / ATCC 47076</strain>
    </source>
</reference>
<reference key="2">
    <citation type="journal article" date="2006" name="Mol. Syst. Biol.">
        <title>Highly accurate genome sequences of Escherichia coli K-12 strains MG1655 and W3110.</title>
        <authorList>
            <person name="Hayashi K."/>
            <person name="Morooka N."/>
            <person name="Yamamoto Y."/>
            <person name="Fujita K."/>
            <person name="Isono K."/>
            <person name="Choi S."/>
            <person name="Ohtsubo E."/>
            <person name="Baba T."/>
            <person name="Wanner B.L."/>
            <person name="Mori H."/>
            <person name="Horiuchi T."/>
        </authorList>
    </citation>
    <scope>NUCLEOTIDE SEQUENCE [LARGE SCALE GENOMIC DNA]</scope>
    <source>
        <strain>K12 / W3110 / ATCC 27325 / DSM 5911</strain>
    </source>
</reference>
<sequence length="94" mass="10613">MITYHDAFAKANHYLDDADLPVVITLHGRFSQGWYFCFEAREFLETGDEAARLAGNAPFIIDKDSGEIHSLGTAKPLEEYLQDYEIKKATFGLP</sequence>
<protein>
    <recommendedName>
        <fullName>Uncharacterized protein YrhB</fullName>
    </recommendedName>
</protein>
<keyword id="KW-1185">Reference proteome</keyword>